<name>RSEB_SHIFL</name>
<sequence length="318" mass="35750">MKQLWFAMSLVTGSLLFSANASATPASGALLQQMNLASQSLNYELSFISINKQGVESLRYRHARLDNRPLAQLLQMDGPRREVVQRGNEISYFEPGLEPFTLNGDYIVDSLPSLIYTDFKRLSPYYDFISVGRTRIADRLCEVIRVVARDGTRYSYIVWMDTESKLPMRVDLLDRDGETLEQFRVIAFNVNQDISSSMQTLAKANLPPLLSVPVGEKAKFSWTPTWLPQGFSEVSSSRRPLPTMDNMPIESRLYSDGLFSFSVNVNRATPSSTDQMLRTGRRTVSTSVRDNAEITIVGELPPQTAKRIAENIKFGAAQ</sequence>
<comment type="function">
    <text evidence="1">Negatively modulates the activity of sigma-E (RpoE) by stabilizing RseA under non-stress conditions. Although not essential for association of sigma-E with Rsea it increases their affinity 2- to 3-fold. When bound to RseA it prevents proteolysis by DegS, which is probably relieved by lipopolysaccharide binding (LPS) (By similarity).</text>
</comment>
<comment type="activity regulation">
    <text evidence="1">Binding to RseA is inhibited by LPS fragments; phosphorylated N-acetylglucosamine (GlcNAc) with N-linked acyl chains are minimally necessary to disrupt binding to RseA. Once RseB is no longer bound to RseA the latter is susceptible to DegS degradation. Thus if periplasmic LPS levels increase the sigma-E regulon is induced (By similarity).</text>
</comment>
<comment type="subunit">
    <text evidence="1">Homodimer. Interacts with RseA (By similarity).</text>
</comment>
<comment type="subcellular location">
    <subcellularLocation>
        <location evidence="1">Periplasm</location>
    </subcellularLocation>
    <text evidence="1">Partially associates with the inner membrane via RseA.</text>
</comment>
<comment type="similarity">
    <text evidence="3">Belongs to the RseB family.</text>
</comment>
<evidence type="ECO:0000250" key="1"/>
<evidence type="ECO:0000255" key="2"/>
<evidence type="ECO:0000305" key="3"/>
<keyword id="KW-0446">Lipid-binding</keyword>
<keyword id="KW-0574">Periplasm</keyword>
<keyword id="KW-1185">Reference proteome</keyword>
<keyword id="KW-0732">Signal</keyword>
<keyword id="KW-0804">Transcription</keyword>
<keyword id="KW-0805">Transcription regulation</keyword>
<gene>
    <name type="primary">rseB</name>
    <name type="ordered locus">SF2633</name>
    <name type="ordered locus">S2806</name>
</gene>
<proteinExistence type="inferred from homology"/>
<reference key="1">
    <citation type="journal article" date="2002" name="Nucleic Acids Res.">
        <title>Genome sequence of Shigella flexneri 2a: insights into pathogenicity through comparison with genomes of Escherichia coli K12 and O157.</title>
        <authorList>
            <person name="Jin Q."/>
            <person name="Yuan Z."/>
            <person name="Xu J."/>
            <person name="Wang Y."/>
            <person name="Shen Y."/>
            <person name="Lu W."/>
            <person name="Wang J."/>
            <person name="Liu H."/>
            <person name="Yang J."/>
            <person name="Yang F."/>
            <person name="Zhang X."/>
            <person name="Zhang J."/>
            <person name="Yang G."/>
            <person name="Wu H."/>
            <person name="Qu D."/>
            <person name="Dong J."/>
            <person name="Sun L."/>
            <person name="Xue Y."/>
            <person name="Zhao A."/>
            <person name="Gao Y."/>
            <person name="Zhu J."/>
            <person name="Kan B."/>
            <person name="Ding K."/>
            <person name="Chen S."/>
            <person name="Cheng H."/>
            <person name="Yao Z."/>
            <person name="He B."/>
            <person name="Chen R."/>
            <person name="Ma D."/>
            <person name="Qiang B."/>
            <person name="Wen Y."/>
            <person name="Hou Y."/>
            <person name="Yu J."/>
        </authorList>
    </citation>
    <scope>NUCLEOTIDE SEQUENCE [LARGE SCALE GENOMIC DNA]</scope>
    <source>
        <strain>301 / Serotype 2a</strain>
    </source>
</reference>
<reference key="2">
    <citation type="journal article" date="2003" name="Infect. Immun.">
        <title>Complete genome sequence and comparative genomics of Shigella flexneri serotype 2a strain 2457T.</title>
        <authorList>
            <person name="Wei J."/>
            <person name="Goldberg M.B."/>
            <person name="Burland V."/>
            <person name="Venkatesan M.M."/>
            <person name="Deng W."/>
            <person name="Fournier G."/>
            <person name="Mayhew G.F."/>
            <person name="Plunkett G. III"/>
            <person name="Rose D.J."/>
            <person name="Darling A."/>
            <person name="Mau B."/>
            <person name="Perna N.T."/>
            <person name="Payne S.M."/>
            <person name="Runyen-Janecky L.J."/>
            <person name="Zhou S."/>
            <person name="Schwartz D.C."/>
            <person name="Blattner F.R."/>
        </authorList>
    </citation>
    <scope>NUCLEOTIDE SEQUENCE [LARGE SCALE GENOMIC DNA]</scope>
    <source>
        <strain>ATCC 700930 / 2457T / Serotype 2a</strain>
    </source>
</reference>
<accession>P0AFY1</accession>
<accession>P46186</accession>
<dbReference type="EMBL" id="AE005674">
    <property type="protein sequence ID" value="AAN44130.1"/>
    <property type="molecule type" value="Genomic_DNA"/>
</dbReference>
<dbReference type="EMBL" id="AE014073">
    <property type="protein sequence ID" value="AAP17954.1"/>
    <property type="molecule type" value="Genomic_DNA"/>
</dbReference>
<dbReference type="RefSeq" id="NP_708423.1">
    <property type="nucleotide sequence ID" value="NC_004337.2"/>
</dbReference>
<dbReference type="RefSeq" id="WP_000812053.1">
    <property type="nucleotide sequence ID" value="NZ_WPGW01000044.1"/>
</dbReference>
<dbReference type="SMR" id="P0AFY1"/>
<dbReference type="STRING" id="198214.SF2633"/>
<dbReference type="PaxDb" id="198214-SF2633"/>
<dbReference type="GeneID" id="1027220"/>
<dbReference type="GeneID" id="75206265"/>
<dbReference type="KEGG" id="sfl:SF2633"/>
<dbReference type="KEGG" id="sfx:S2806"/>
<dbReference type="PATRIC" id="fig|198214.7.peg.3141"/>
<dbReference type="HOGENOM" id="CLU_054710_1_0_6"/>
<dbReference type="Proteomes" id="UP000001006">
    <property type="component" value="Chromosome"/>
</dbReference>
<dbReference type="Proteomes" id="UP000002673">
    <property type="component" value="Chromosome"/>
</dbReference>
<dbReference type="GO" id="GO:0030288">
    <property type="term" value="C:outer membrane-bounded periplasmic space"/>
    <property type="evidence" value="ECO:0007669"/>
    <property type="project" value="TreeGrafter"/>
</dbReference>
<dbReference type="GO" id="GO:0045152">
    <property type="term" value="F:antisigma factor binding"/>
    <property type="evidence" value="ECO:0007669"/>
    <property type="project" value="TreeGrafter"/>
</dbReference>
<dbReference type="GO" id="GO:0008289">
    <property type="term" value="F:lipid binding"/>
    <property type="evidence" value="ECO:0007669"/>
    <property type="project" value="UniProtKB-KW"/>
</dbReference>
<dbReference type="GO" id="GO:0032885">
    <property type="term" value="P:regulation of polysaccharide biosynthetic process"/>
    <property type="evidence" value="ECO:0007669"/>
    <property type="project" value="TreeGrafter"/>
</dbReference>
<dbReference type="CDD" id="cd16327">
    <property type="entry name" value="RseB"/>
    <property type="match status" value="1"/>
</dbReference>
<dbReference type="FunFam" id="2.50.20.10:FF:000003">
    <property type="entry name" value="Sigma-E factor regulatory protein RseB"/>
    <property type="match status" value="1"/>
</dbReference>
<dbReference type="FunFam" id="3.30.200.100:FF:000001">
    <property type="entry name" value="Sigma-E factor regulatory protein RseB"/>
    <property type="match status" value="1"/>
</dbReference>
<dbReference type="Gene3D" id="2.50.20.10">
    <property type="entry name" value="Lipoprotein localisation LolA/LolB/LppX"/>
    <property type="match status" value="1"/>
</dbReference>
<dbReference type="Gene3D" id="3.30.200.100">
    <property type="entry name" value="MucB/RseB, C-terminal domain"/>
    <property type="match status" value="1"/>
</dbReference>
<dbReference type="InterPro" id="IPR033436">
    <property type="entry name" value="MucB/RseB_C"/>
</dbReference>
<dbReference type="InterPro" id="IPR038484">
    <property type="entry name" value="MucB/RseB_C_sf"/>
</dbReference>
<dbReference type="InterPro" id="IPR033434">
    <property type="entry name" value="MucB/RseB_N"/>
</dbReference>
<dbReference type="InterPro" id="IPR005588">
    <property type="entry name" value="MucB_RseB"/>
</dbReference>
<dbReference type="NCBIfam" id="NF006990">
    <property type="entry name" value="PRK09455.1"/>
    <property type="match status" value="1"/>
</dbReference>
<dbReference type="PANTHER" id="PTHR38782">
    <property type="match status" value="1"/>
</dbReference>
<dbReference type="PANTHER" id="PTHR38782:SF1">
    <property type="entry name" value="SIGMA-E FACTOR REGULATORY PROTEIN RSEB"/>
    <property type="match status" value="1"/>
</dbReference>
<dbReference type="Pfam" id="PF03888">
    <property type="entry name" value="MucB_RseB"/>
    <property type="match status" value="1"/>
</dbReference>
<dbReference type="Pfam" id="PF17188">
    <property type="entry name" value="MucB_RseB_C"/>
    <property type="match status" value="1"/>
</dbReference>
<dbReference type="PIRSF" id="PIRSF005427">
    <property type="entry name" value="RseB"/>
    <property type="match status" value="1"/>
</dbReference>
<organism>
    <name type="scientific">Shigella flexneri</name>
    <dbReference type="NCBI Taxonomy" id="623"/>
    <lineage>
        <taxon>Bacteria</taxon>
        <taxon>Pseudomonadati</taxon>
        <taxon>Pseudomonadota</taxon>
        <taxon>Gammaproteobacteria</taxon>
        <taxon>Enterobacterales</taxon>
        <taxon>Enterobacteriaceae</taxon>
        <taxon>Shigella</taxon>
    </lineage>
</organism>
<feature type="signal peptide" evidence="2">
    <location>
        <begin position="1"/>
        <end position="23"/>
    </location>
</feature>
<feature type="chain" id="PRO_0000045240" description="Sigma-E factor regulatory protein RseB">
    <location>
        <begin position="24"/>
        <end position="318"/>
    </location>
</feature>
<protein>
    <recommendedName>
        <fullName>Sigma-E factor regulatory protein RseB</fullName>
    </recommendedName>
</protein>